<accession>Q7Y138</accession>
<accession>B9F7F2</accession>
<accession>Q10B25</accession>
<organism>
    <name type="scientific">Oryza sativa subsp. japonica</name>
    <name type="common">Rice</name>
    <dbReference type="NCBI Taxonomy" id="39947"/>
    <lineage>
        <taxon>Eukaryota</taxon>
        <taxon>Viridiplantae</taxon>
        <taxon>Streptophyta</taxon>
        <taxon>Embryophyta</taxon>
        <taxon>Tracheophyta</taxon>
        <taxon>Spermatophyta</taxon>
        <taxon>Magnoliopsida</taxon>
        <taxon>Liliopsida</taxon>
        <taxon>Poales</taxon>
        <taxon>Poaceae</taxon>
        <taxon>BOP clade</taxon>
        <taxon>Oryzoideae</taxon>
        <taxon>Oryzeae</taxon>
        <taxon>Oryzinae</taxon>
        <taxon>Oryza</taxon>
        <taxon>Oryza sativa</taxon>
    </lineage>
</organism>
<reference key="1">
    <citation type="journal article" date="2005" name="Genome Res.">
        <title>Sequence, annotation, and analysis of synteny between rice chromosome 3 and diverged grass species.</title>
        <authorList>
            <consortium name="The rice chromosome 3 sequencing consortium"/>
            <person name="Buell C.R."/>
            <person name="Yuan Q."/>
            <person name="Ouyang S."/>
            <person name="Liu J."/>
            <person name="Zhu W."/>
            <person name="Wang A."/>
            <person name="Maiti R."/>
            <person name="Haas B."/>
            <person name="Wortman J."/>
            <person name="Pertea M."/>
            <person name="Jones K.M."/>
            <person name="Kim M."/>
            <person name="Overton L."/>
            <person name="Tsitrin T."/>
            <person name="Fadrosh D."/>
            <person name="Bera J."/>
            <person name="Weaver B."/>
            <person name="Jin S."/>
            <person name="Johri S."/>
            <person name="Reardon M."/>
            <person name="Webb K."/>
            <person name="Hill J."/>
            <person name="Moffat K."/>
            <person name="Tallon L."/>
            <person name="Van Aken S."/>
            <person name="Lewis M."/>
            <person name="Utterback T."/>
            <person name="Feldblyum T."/>
            <person name="Zismann V."/>
            <person name="Iobst S."/>
            <person name="Hsiao J."/>
            <person name="de Vazeille A.R."/>
            <person name="Salzberg S.L."/>
            <person name="White O."/>
            <person name="Fraser C.M."/>
            <person name="Yu Y."/>
            <person name="Kim H."/>
            <person name="Rambo T."/>
            <person name="Currie J."/>
            <person name="Collura K."/>
            <person name="Kernodle-Thompson S."/>
            <person name="Wei F."/>
            <person name="Kudrna K."/>
            <person name="Ammiraju J.S.S."/>
            <person name="Luo M."/>
            <person name="Goicoechea J.L."/>
            <person name="Wing R.A."/>
            <person name="Henry D."/>
            <person name="Oates R."/>
            <person name="Palmer M."/>
            <person name="Pries G."/>
            <person name="Saski C."/>
            <person name="Simmons J."/>
            <person name="Soderlund C."/>
            <person name="Nelson W."/>
            <person name="de la Bastide M."/>
            <person name="Spiegel L."/>
            <person name="Nascimento L."/>
            <person name="Huang E."/>
            <person name="Preston R."/>
            <person name="Zutavern T."/>
            <person name="Palmer L."/>
            <person name="O'Shaughnessy A."/>
            <person name="Dike S."/>
            <person name="McCombie W.R."/>
            <person name="Minx P."/>
            <person name="Cordum H."/>
            <person name="Wilson R."/>
            <person name="Jin W."/>
            <person name="Lee H.R."/>
            <person name="Jiang J."/>
            <person name="Jackson S."/>
        </authorList>
    </citation>
    <scope>NUCLEOTIDE SEQUENCE [LARGE SCALE GENOMIC DNA]</scope>
    <source>
        <strain>cv. Nipponbare</strain>
    </source>
</reference>
<reference key="2">
    <citation type="journal article" date="2005" name="Nature">
        <title>The map-based sequence of the rice genome.</title>
        <authorList>
            <consortium name="International rice genome sequencing project (IRGSP)"/>
        </authorList>
    </citation>
    <scope>NUCLEOTIDE SEQUENCE [LARGE SCALE GENOMIC DNA]</scope>
    <source>
        <strain>cv. Nipponbare</strain>
    </source>
</reference>
<reference key="3">
    <citation type="journal article" date="2008" name="Nucleic Acids Res.">
        <title>The rice annotation project database (RAP-DB): 2008 update.</title>
        <authorList>
            <consortium name="The rice annotation project (RAP)"/>
        </authorList>
    </citation>
    <scope>GENOME REANNOTATION</scope>
    <source>
        <strain>cv. Nipponbare</strain>
    </source>
</reference>
<reference key="4">
    <citation type="journal article" date="2013" name="Rice">
        <title>Improvement of the Oryza sativa Nipponbare reference genome using next generation sequence and optical map data.</title>
        <authorList>
            <person name="Kawahara Y."/>
            <person name="de la Bastide M."/>
            <person name="Hamilton J.P."/>
            <person name="Kanamori H."/>
            <person name="McCombie W.R."/>
            <person name="Ouyang S."/>
            <person name="Schwartz D.C."/>
            <person name="Tanaka T."/>
            <person name="Wu J."/>
            <person name="Zhou S."/>
            <person name="Childs K.L."/>
            <person name="Davidson R.M."/>
            <person name="Lin H."/>
            <person name="Quesada-Ocampo L."/>
            <person name="Vaillancourt B."/>
            <person name="Sakai H."/>
            <person name="Lee S.S."/>
            <person name="Kim J."/>
            <person name="Numa H."/>
            <person name="Itoh T."/>
            <person name="Buell C.R."/>
            <person name="Matsumoto T."/>
        </authorList>
    </citation>
    <scope>GENOME REANNOTATION</scope>
    <source>
        <strain>cv. Nipponbare</strain>
    </source>
</reference>
<reference key="5">
    <citation type="journal article" date="2005" name="PLoS Biol.">
        <title>The genomes of Oryza sativa: a history of duplications.</title>
        <authorList>
            <person name="Yu J."/>
            <person name="Wang J."/>
            <person name="Lin W."/>
            <person name="Li S."/>
            <person name="Li H."/>
            <person name="Zhou J."/>
            <person name="Ni P."/>
            <person name="Dong W."/>
            <person name="Hu S."/>
            <person name="Zeng C."/>
            <person name="Zhang J."/>
            <person name="Zhang Y."/>
            <person name="Li R."/>
            <person name="Xu Z."/>
            <person name="Li S."/>
            <person name="Li X."/>
            <person name="Zheng H."/>
            <person name="Cong L."/>
            <person name="Lin L."/>
            <person name="Yin J."/>
            <person name="Geng J."/>
            <person name="Li G."/>
            <person name="Shi J."/>
            <person name="Liu J."/>
            <person name="Lv H."/>
            <person name="Li J."/>
            <person name="Wang J."/>
            <person name="Deng Y."/>
            <person name="Ran L."/>
            <person name="Shi X."/>
            <person name="Wang X."/>
            <person name="Wu Q."/>
            <person name="Li C."/>
            <person name="Ren X."/>
            <person name="Wang J."/>
            <person name="Wang X."/>
            <person name="Li D."/>
            <person name="Liu D."/>
            <person name="Zhang X."/>
            <person name="Ji Z."/>
            <person name="Zhao W."/>
            <person name="Sun Y."/>
            <person name="Zhang Z."/>
            <person name="Bao J."/>
            <person name="Han Y."/>
            <person name="Dong L."/>
            <person name="Ji J."/>
            <person name="Chen P."/>
            <person name="Wu S."/>
            <person name="Liu J."/>
            <person name="Xiao Y."/>
            <person name="Bu D."/>
            <person name="Tan J."/>
            <person name="Yang L."/>
            <person name="Ye C."/>
            <person name="Zhang J."/>
            <person name="Xu J."/>
            <person name="Zhou Y."/>
            <person name="Yu Y."/>
            <person name="Zhang B."/>
            <person name="Zhuang S."/>
            <person name="Wei H."/>
            <person name="Liu B."/>
            <person name="Lei M."/>
            <person name="Yu H."/>
            <person name="Li Y."/>
            <person name="Xu H."/>
            <person name="Wei S."/>
            <person name="He X."/>
            <person name="Fang L."/>
            <person name="Zhang Z."/>
            <person name="Zhang Y."/>
            <person name="Huang X."/>
            <person name="Su Z."/>
            <person name="Tong W."/>
            <person name="Li J."/>
            <person name="Tong Z."/>
            <person name="Li S."/>
            <person name="Ye J."/>
            <person name="Wang L."/>
            <person name="Fang L."/>
            <person name="Lei T."/>
            <person name="Chen C.-S."/>
            <person name="Chen H.-C."/>
            <person name="Xu Z."/>
            <person name="Li H."/>
            <person name="Huang H."/>
            <person name="Zhang F."/>
            <person name="Xu H."/>
            <person name="Li N."/>
            <person name="Zhao C."/>
            <person name="Li S."/>
            <person name="Dong L."/>
            <person name="Huang Y."/>
            <person name="Li L."/>
            <person name="Xi Y."/>
            <person name="Qi Q."/>
            <person name="Li W."/>
            <person name="Zhang B."/>
            <person name="Hu W."/>
            <person name="Zhang Y."/>
            <person name="Tian X."/>
            <person name="Jiao Y."/>
            <person name="Liang X."/>
            <person name="Jin J."/>
            <person name="Gao L."/>
            <person name="Zheng W."/>
            <person name="Hao B."/>
            <person name="Liu S.-M."/>
            <person name="Wang W."/>
            <person name="Yuan L."/>
            <person name="Cao M."/>
            <person name="McDermott J."/>
            <person name="Samudrala R."/>
            <person name="Wang J."/>
            <person name="Wong G.K.-S."/>
            <person name="Yang H."/>
        </authorList>
    </citation>
    <scope>NUCLEOTIDE SEQUENCE [LARGE SCALE GENOMIC DNA]</scope>
    <source>
        <strain>cv. Nipponbare</strain>
    </source>
</reference>
<reference key="6">
    <citation type="journal article" date="2003" name="Science">
        <title>Collection, mapping, and annotation of over 28,000 cDNA clones from japonica rice.</title>
        <authorList>
            <consortium name="The rice full-length cDNA consortium"/>
        </authorList>
    </citation>
    <scope>NUCLEOTIDE SEQUENCE [LARGE SCALE MRNA]</scope>
    <source>
        <strain>cv. Nipponbare</strain>
    </source>
</reference>
<reference key="7">
    <citation type="journal article" date="2008" name="BMC Genomics">
        <title>Genome-wide and expression analysis of protein phosphatase 2C in rice and Arabidopsis.</title>
        <authorList>
            <person name="Xue T."/>
            <person name="Wang D."/>
            <person name="Zhang S."/>
            <person name="Ehlting J."/>
            <person name="Ni F."/>
            <person name="Jacab S."/>
            <person name="Zheng C."/>
            <person name="Zhong Y."/>
        </authorList>
    </citation>
    <scope>GENE FAMILY</scope>
    <scope>NOMENCLATURE</scope>
</reference>
<name>P2C36_ORYSJ</name>
<protein>
    <recommendedName>
        <fullName>Probable protein phosphatase 2C 36</fullName>
        <shortName>OsPP2C36</shortName>
        <ecNumber>3.1.3.16</ecNumber>
    </recommendedName>
</protein>
<feature type="chain" id="PRO_0000363283" description="Probable protein phosphatase 2C 36">
    <location>
        <begin position="1"/>
        <end position="386"/>
    </location>
</feature>
<feature type="domain" description="PPM-type phosphatase" evidence="2">
    <location>
        <begin position="60"/>
        <end position="363"/>
    </location>
</feature>
<feature type="binding site" evidence="1">
    <location>
        <position position="94"/>
    </location>
    <ligand>
        <name>Mn(2+)</name>
        <dbReference type="ChEBI" id="CHEBI:29035"/>
        <label>1</label>
    </ligand>
</feature>
<feature type="binding site" evidence="1">
    <location>
        <position position="94"/>
    </location>
    <ligand>
        <name>Mn(2+)</name>
        <dbReference type="ChEBI" id="CHEBI:29035"/>
        <label>2</label>
    </ligand>
</feature>
<feature type="binding site" evidence="1">
    <location>
        <position position="95"/>
    </location>
    <ligand>
        <name>Mn(2+)</name>
        <dbReference type="ChEBI" id="CHEBI:29035"/>
        <label>1</label>
    </ligand>
</feature>
<feature type="binding site" evidence="1">
    <location>
        <position position="295"/>
    </location>
    <ligand>
        <name>Mn(2+)</name>
        <dbReference type="ChEBI" id="CHEBI:29035"/>
        <label>2</label>
    </ligand>
</feature>
<feature type="binding site" evidence="1">
    <location>
        <position position="354"/>
    </location>
    <ligand>
        <name>Mn(2+)</name>
        <dbReference type="ChEBI" id="CHEBI:29035"/>
        <label>2</label>
    </ligand>
</feature>
<proteinExistence type="evidence at transcript level"/>
<keyword id="KW-0378">Hydrolase</keyword>
<keyword id="KW-0460">Magnesium</keyword>
<keyword id="KW-0464">Manganese</keyword>
<keyword id="KW-0479">Metal-binding</keyword>
<keyword id="KW-0904">Protein phosphatase</keyword>
<keyword id="KW-1185">Reference proteome</keyword>
<gene>
    <name type="ordered locus">Os03g0832400</name>
    <name type="ordered locus">LOC_Os03g61690</name>
    <name evidence="4" type="ORF">OsJ_13243</name>
    <name type="ORF">OSJNBa0078D06.30</name>
</gene>
<dbReference type="EC" id="3.1.3.16"/>
<dbReference type="EMBL" id="AC133339">
    <property type="protein sequence ID" value="AAP46260.1"/>
    <property type="molecule type" value="Genomic_DNA"/>
</dbReference>
<dbReference type="EMBL" id="DP000009">
    <property type="protein sequence ID" value="ABF99720.1"/>
    <property type="molecule type" value="Genomic_DNA"/>
</dbReference>
<dbReference type="EMBL" id="DP000009">
    <property type="protein sequence ID" value="ABF99721.1"/>
    <property type="status" value="ALT_SEQ"/>
    <property type="molecule type" value="Genomic_DNA"/>
</dbReference>
<dbReference type="EMBL" id="AP008209">
    <property type="protein sequence ID" value="BAF13715.1"/>
    <property type="molecule type" value="Genomic_DNA"/>
</dbReference>
<dbReference type="EMBL" id="AP014959">
    <property type="protein sequence ID" value="BAS87214.1"/>
    <property type="molecule type" value="Genomic_DNA"/>
</dbReference>
<dbReference type="EMBL" id="CM000140">
    <property type="protein sequence ID" value="EEE60239.1"/>
    <property type="molecule type" value="Genomic_DNA"/>
</dbReference>
<dbReference type="EMBL" id="AK120748">
    <property type="protein sequence ID" value="BAH00153.1"/>
    <property type="molecule type" value="mRNA"/>
</dbReference>
<dbReference type="RefSeq" id="XP_015632704.1">
    <property type="nucleotide sequence ID" value="XM_015777218.1"/>
</dbReference>
<dbReference type="SMR" id="Q7Y138"/>
<dbReference type="FunCoup" id="Q7Y138">
    <property type="interactions" value="2311"/>
</dbReference>
<dbReference type="STRING" id="39947.Q7Y138"/>
<dbReference type="PaxDb" id="39947-Q7Y138"/>
<dbReference type="EnsemblPlants" id="Os03t0832400-01">
    <property type="protein sequence ID" value="Os03t0832400-01"/>
    <property type="gene ID" value="Os03g0832400"/>
</dbReference>
<dbReference type="Gramene" id="Os03t0832400-01">
    <property type="protein sequence ID" value="Os03t0832400-01"/>
    <property type="gene ID" value="Os03g0832400"/>
</dbReference>
<dbReference type="KEGG" id="dosa:Os03g0832400"/>
<dbReference type="eggNOG" id="KOG0700">
    <property type="taxonomic scope" value="Eukaryota"/>
</dbReference>
<dbReference type="HOGENOM" id="CLU_013173_2_0_1"/>
<dbReference type="InParanoid" id="Q7Y138"/>
<dbReference type="OMA" id="SCACLAY"/>
<dbReference type="Proteomes" id="UP000000763">
    <property type="component" value="Chromosome 3"/>
</dbReference>
<dbReference type="Proteomes" id="UP000007752">
    <property type="component" value="Chromosome 3"/>
</dbReference>
<dbReference type="Proteomes" id="UP000059680">
    <property type="component" value="Chromosome 3"/>
</dbReference>
<dbReference type="GO" id="GO:0046872">
    <property type="term" value="F:metal ion binding"/>
    <property type="evidence" value="ECO:0007669"/>
    <property type="project" value="UniProtKB-KW"/>
</dbReference>
<dbReference type="GO" id="GO:0004722">
    <property type="term" value="F:protein serine/threonine phosphatase activity"/>
    <property type="evidence" value="ECO:0000318"/>
    <property type="project" value="GO_Central"/>
</dbReference>
<dbReference type="GO" id="GO:1902531">
    <property type="term" value="P:regulation of intracellular signal transduction"/>
    <property type="evidence" value="ECO:0000318"/>
    <property type="project" value="GO_Central"/>
</dbReference>
<dbReference type="CDD" id="cd00143">
    <property type="entry name" value="PP2Cc"/>
    <property type="match status" value="1"/>
</dbReference>
<dbReference type="FunFam" id="3.60.40.10:FF:000020">
    <property type="entry name" value="Probable protein phosphatase 2C 42"/>
    <property type="match status" value="1"/>
</dbReference>
<dbReference type="Gene3D" id="3.60.40.10">
    <property type="entry name" value="PPM-type phosphatase domain"/>
    <property type="match status" value="1"/>
</dbReference>
<dbReference type="InterPro" id="IPR015655">
    <property type="entry name" value="PP2C"/>
</dbReference>
<dbReference type="InterPro" id="IPR036457">
    <property type="entry name" value="PPM-type-like_dom_sf"/>
</dbReference>
<dbReference type="InterPro" id="IPR001932">
    <property type="entry name" value="PPM-type_phosphatase-like_dom"/>
</dbReference>
<dbReference type="PANTHER" id="PTHR47992">
    <property type="entry name" value="PROTEIN PHOSPHATASE"/>
    <property type="match status" value="1"/>
</dbReference>
<dbReference type="Pfam" id="PF00481">
    <property type="entry name" value="PP2C"/>
    <property type="match status" value="1"/>
</dbReference>
<dbReference type="SMART" id="SM00332">
    <property type="entry name" value="PP2Cc"/>
    <property type="match status" value="1"/>
</dbReference>
<dbReference type="SUPFAM" id="SSF81606">
    <property type="entry name" value="PP2C-like"/>
    <property type="match status" value="1"/>
</dbReference>
<dbReference type="PROSITE" id="PS51746">
    <property type="entry name" value="PPM_2"/>
    <property type="match status" value="1"/>
</dbReference>
<comment type="catalytic activity">
    <reaction>
        <text>O-phospho-L-seryl-[protein] + H2O = L-seryl-[protein] + phosphate</text>
        <dbReference type="Rhea" id="RHEA:20629"/>
        <dbReference type="Rhea" id="RHEA-COMP:9863"/>
        <dbReference type="Rhea" id="RHEA-COMP:11604"/>
        <dbReference type="ChEBI" id="CHEBI:15377"/>
        <dbReference type="ChEBI" id="CHEBI:29999"/>
        <dbReference type="ChEBI" id="CHEBI:43474"/>
        <dbReference type="ChEBI" id="CHEBI:83421"/>
        <dbReference type="EC" id="3.1.3.16"/>
    </reaction>
</comment>
<comment type="catalytic activity">
    <reaction>
        <text>O-phospho-L-threonyl-[protein] + H2O = L-threonyl-[protein] + phosphate</text>
        <dbReference type="Rhea" id="RHEA:47004"/>
        <dbReference type="Rhea" id="RHEA-COMP:11060"/>
        <dbReference type="Rhea" id="RHEA-COMP:11605"/>
        <dbReference type="ChEBI" id="CHEBI:15377"/>
        <dbReference type="ChEBI" id="CHEBI:30013"/>
        <dbReference type="ChEBI" id="CHEBI:43474"/>
        <dbReference type="ChEBI" id="CHEBI:61977"/>
        <dbReference type="EC" id="3.1.3.16"/>
    </reaction>
</comment>
<comment type="cofactor">
    <cofactor evidence="1">
        <name>Mg(2+)</name>
        <dbReference type="ChEBI" id="CHEBI:18420"/>
    </cofactor>
    <cofactor evidence="1">
        <name>Mn(2+)</name>
        <dbReference type="ChEBI" id="CHEBI:29035"/>
    </cofactor>
    <text evidence="1">Binds 2 magnesium or manganese ions per subunit.</text>
</comment>
<comment type="similarity">
    <text evidence="3">Belongs to the PP2C family.</text>
</comment>
<comment type="sequence caution" evidence="3">
    <conflict type="erroneous gene model prediction">
        <sequence resource="EMBL-CDS" id="ABF99721"/>
    </conflict>
</comment>
<evidence type="ECO:0000250" key="1"/>
<evidence type="ECO:0000255" key="2">
    <source>
        <dbReference type="PROSITE-ProRule" id="PRU01082"/>
    </source>
</evidence>
<evidence type="ECO:0000305" key="3"/>
<evidence type="ECO:0000312" key="4">
    <source>
        <dbReference type="EMBL" id="EEE60239.1"/>
    </source>
</evidence>
<sequence>MLGALLRLLSACGGVWPTSPAPPARSSSSSSAAAAADQAAAEGRDGLLWWRDLARCHAGELSVAVVQGNHVLEDQCRVESGPPPLAATCIGVFDGHAGPDAARFACDHLLPNLREAASGPEGVTADAIRDAFLATEEGFLAVVSRMWEAQPDMATVGTCCLVGVVHQRTLFVANLGDSRAVLGKKVGRAGQITAEQLSSEHNANEEDVRQELMAQHPDDPQIVALKHGVWRVKGIIQVSRSLGDAYLKHSQYNTEQIKPKFRLPEPFSRPILSANPSIIARCLQPSDCFIIFASDGLWEHLSNQQAVEIVHNHQRAGSARRLIKAALHEAARKREMRYSDLMKIDKKVRRHFHDDITVIVLFINYDQLAKGHSQGQSLSIRCALDH</sequence>